<evidence type="ECO:0000255" key="1">
    <source>
        <dbReference type="HAMAP-Rule" id="MF_00001"/>
    </source>
</evidence>
<evidence type="ECO:0000305" key="2"/>
<name>PYRB_STRPB</name>
<proteinExistence type="inferred from homology"/>
<comment type="function">
    <text evidence="1">Catalyzes the condensation of carbamoyl phosphate and aspartate to form carbamoyl aspartate and inorganic phosphate, the committed step in the de novo pyrimidine nucleotide biosynthesis pathway.</text>
</comment>
<comment type="catalytic activity">
    <reaction evidence="1">
        <text>carbamoyl phosphate + L-aspartate = N-carbamoyl-L-aspartate + phosphate + H(+)</text>
        <dbReference type="Rhea" id="RHEA:20013"/>
        <dbReference type="ChEBI" id="CHEBI:15378"/>
        <dbReference type="ChEBI" id="CHEBI:29991"/>
        <dbReference type="ChEBI" id="CHEBI:32814"/>
        <dbReference type="ChEBI" id="CHEBI:43474"/>
        <dbReference type="ChEBI" id="CHEBI:58228"/>
        <dbReference type="EC" id="2.1.3.2"/>
    </reaction>
</comment>
<comment type="pathway">
    <text evidence="1">Pyrimidine metabolism; UMP biosynthesis via de novo pathway; (S)-dihydroorotate from bicarbonate: step 2/3.</text>
</comment>
<comment type="subunit">
    <text evidence="1">Heterododecamer (2C3:3R2) of six catalytic PyrB chains organized as two trimers (C3), and six regulatory PyrI chains organized as three dimers (R2).</text>
</comment>
<comment type="similarity">
    <text evidence="1">Belongs to the aspartate/ornithine carbamoyltransferase superfamily. ATCase family.</text>
</comment>
<comment type="sequence caution" evidence="2">
    <conflict type="erroneous initiation">
        <sequence resource="EMBL-CDS" id="ABF35760"/>
    </conflict>
</comment>
<accession>Q1JCE8</accession>
<protein>
    <recommendedName>
        <fullName evidence="1">Aspartate carbamoyltransferase catalytic subunit</fullName>
        <ecNumber evidence="1">2.1.3.2</ecNumber>
    </recommendedName>
    <alternativeName>
        <fullName evidence="1">Aspartate transcarbamylase</fullName>
        <shortName evidence="1">ATCase</shortName>
    </alternativeName>
</protein>
<keyword id="KW-0665">Pyrimidine biosynthesis</keyword>
<keyword id="KW-0808">Transferase</keyword>
<gene>
    <name evidence="1" type="primary">pyrB</name>
    <name type="ordered locus">MGAS2096_Spy0708</name>
</gene>
<organism>
    <name type="scientific">Streptococcus pyogenes serotype M12 (strain MGAS2096)</name>
    <dbReference type="NCBI Taxonomy" id="370553"/>
    <lineage>
        <taxon>Bacteria</taxon>
        <taxon>Bacillati</taxon>
        <taxon>Bacillota</taxon>
        <taxon>Bacilli</taxon>
        <taxon>Lactobacillales</taxon>
        <taxon>Streptococcaceae</taxon>
        <taxon>Streptococcus</taxon>
    </lineage>
</organism>
<sequence length="311" mass="34596">MSVVNNRVALTNLVSMEALTTEEVLGLINRGSEYKAGKVVISDHQKDLVANLFFENSTRTHKSFEVAEKKLGLTVLDFNADASAVNKGESLYDTVLTMSALGTDICVIRHPEDDYYKELVESPTITASIVNGGDGSGQHPSQCLLDLLTIYEEFGHFEGLKIAIAGDLTHSRVAKSNMQILKRLGAELYFYGPEEWYSEAFNAYGTYIAIDQIIKELDVLMLLRVQHERHDGHQSFSKEGYHQAFGLTQERYQQLKDSAIIMHPAPVNRDVEIADSLVEAPKARIVSQMANGVFVRMAIIEAILNGRNKNS</sequence>
<dbReference type="EC" id="2.1.3.2" evidence="1"/>
<dbReference type="EMBL" id="CP000261">
    <property type="protein sequence ID" value="ABF35760.1"/>
    <property type="status" value="ALT_INIT"/>
    <property type="molecule type" value="Genomic_DNA"/>
</dbReference>
<dbReference type="SMR" id="Q1JCE8"/>
<dbReference type="KEGG" id="spj:MGAS2096_Spy0708"/>
<dbReference type="HOGENOM" id="CLU_043846_2_1_9"/>
<dbReference type="UniPathway" id="UPA00070">
    <property type="reaction ID" value="UER00116"/>
</dbReference>
<dbReference type="GO" id="GO:0005829">
    <property type="term" value="C:cytosol"/>
    <property type="evidence" value="ECO:0007669"/>
    <property type="project" value="TreeGrafter"/>
</dbReference>
<dbReference type="GO" id="GO:0016597">
    <property type="term" value="F:amino acid binding"/>
    <property type="evidence" value="ECO:0007669"/>
    <property type="project" value="InterPro"/>
</dbReference>
<dbReference type="GO" id="GO:0004070">
    <property type="term" value="F:aspartate carbamoyltransferase activity"/>
    <property type="evidence" value="ECO:0007669"/>
    <property type="project" value="UniProtKB-UniRule"/>
</dbReference>
<dbReference type="GO" id="GO:0006207">
    <property type="term" value="P:'de novo' pyrimidine nucleobase biosynthetic process"/>
    <property type="evidence" value="ECO:0007669"/>
    <property type="project" value="InterPro"/>
</dbReference>
<dbReference type="GO" id="GO:0044205">
    <property type="term" value="P:'de novo' UMP biosynthetic process"/>
    <property type="evidence" value="ECO:0007669"/>
    <property type="project" value="UniProtKB-UniRule"/>
</dbReference>
<dbReference type="GO" id="GO:0006520">
    <property type="term" value="P:amino acid metabolic process"/>
    <property type="evidence" value="ECO:0007669"/>
    <property type="project" value="InterPro"/>
</dbReference>
<dbReference type="FunFam" id="3.40.50.1370:FF:000011">
    <property type="entry name" value="Aspartate carbamoyltransferase"/>
    <property type="match status" value="1"/>
</dbReference>
<dbReference type="Gene3D" id="3.40.50.1370">
    <property type="entry name" value="Aspartate/ornithine carbamoyltransferase"/>
    <property type="match status" value="2"/>
</dbReference>
<dbReference type="HAMAP" id="MF_00001">
    <property type="entry name" value="Asp_carb_tr"/>
    <property type="match status" value="1"/>
</dbReference>
<dbReference type="InterPro" id="IPR006132">
    <property type="entry name" value="Asp/Orn_carbamoyltranf_P-bd"/>
</dbReference>
<dbReference type="InterPro" id="IPR006130">
    <property type="entry name" value="Asp/Orn_carbamoylTrfase"/>
</dbReference>
<dbReference type="InterPro" id="IPR036901">
    <property type="entry name" value="Asp/Orn_carbamoylTrfase_sf"/>
</dbReference>
<dbReference type="InterPro" id="IPR002082">
    <property type="entry name" value="Asp_carbamoyltransf"/>
</dbReference>
<dbReference type="InterPro" id="IPR006131">
    <property type="entry name" value="Asp_carbamoyltransf_Asp/Orn-bd"/>
</dbReference>
<dbReference type="NCBIfam" id="TIGR00670">
    <property type="entry name" value="asp_carb_tr"/>
    <property type="match status" value="1"/>
</dbReference>
<dbReference type="NCBIfam" id="NF002032">
    <property type="entry name" value="PRK00856.1"/>
    <property type="match status" value="1"/>
</dbReference>
<dbReference type="PANTHER" id="PTHR45753:SF6">
    <property type="entry name" value="ASPARTATE CARBAMOYLTRANSFERASE"/>
    <property type="match status" value="1"/>
</dbReference>
<dbReference type="PANTHER" id="PTHR45753">
    <property type="entry name" value="ORNITHINE CARBAMOYLTRANSFERASE, MITOCHONDRIAL"/>
    <property type="match status" value="1"/>
</dbReference>
<dbReference type="Pfam" id="PF00185">
    <property type="entry name" value="OTCace"/>
    <property type="match status" value="1"/>
</dbReference>
<dbReference type="Pfam" id="PF02729">
    <property type="entry name" value="OTCace_N"/>
    <property type="match status" value="1"/>
</dbReference>
<dbReference type="PRINTS" id="PR00100">
    <property type="entry name" value="AOTCASE"/>
</dbReference>
<dbReference type="PRINTS" id="PR00101">
    <property type="entry name" value="ATCASE"/>
</dbReference>
<dbReference type="SUPFAM" id="SSF53671">
    <property type="entry name" value="Aspartate/ornithine carbamoyltransferase"/>
    <property type="match status" value="1"/>
</dbReference>
<dbReference type="PROSITE" id="PS00097">
    <property type="entry name" value="CARBAMOYLTRANSFERASE"/>
    <property type="match status" value="1"/>
</dbReference>
<reference key="1">
    <citation type="journal article" date="2006" name="Proc. Natl. Acad. Sci. U.S.A.">
        <title>Molecular genetic anatomy of inter- and intraserotype variation in the human bacterial pathogen group A Streptococcus.</title>
        <authorList>
            <person name="Beres S.B."/>
            <person name="Richter E.W."/>
            <person name="Nagiec M.J."/>
            <person name="Sumby P."/>
            <person name="Porcella S.F."/>
            <person name="DeLeo F.R."/>
            <person name="Musser J.M."/>
        </authorList>
    </citation>
    <scope>NUCLEOTIDE SEQUENCE [LARGE SCALE GENOMIC DNA]</scope>
    <source>
        <strain>MGAS2096</strain>
    </source>
</reference>
<feature type="chain" id="PRO_0000321163" description="Aspartate carbamoyltransferase catalytic subunit">
    <location>
        <begin position="1"/>
        <end position="311"/>
    </location>
</feature>
<feature type="binding site" evidence="1">
    <location>
        <position position="59"/>
    </location>
    <ligand>
        <name>carbamoyl phosphate</name>
        <dbReference type="ChEBI" id="CHEBI:58228"/>
    </ligand>
</feature>
<feature type="binding site" evidence="1">
    <location>
        <position position="60"/>
    </location>
    <ligand>
        <name>carbamoyl phosphate</name>
        <dbReference type="ChEBI" id="CHEBI:58228"/>
    </ligand>
</feature>
<feature type="binding site" evidence="1">
    <location>
        <position position="87"/>
    </location>
    <ligand>
        <name>L-aspartate</name>
        <dbReference type="ChEBI" id="CHEBI:29991"/>
    </ligand>
</feature>
<feature type="binding site" evidence="1">
    <location>
        <position position="109"/>
    </location>
    <ligand>
        <name>carbamoyl phosphate</name>
        <dbReference type="ChEBI" id="CHEBI:58228"/>
    </ligand>
</feature>
<feature type="binding site" evidence="1">
    <location>
        <position position="139"/>
    </location>
    <ligand>
        <name>carbamoyl phosphate</name>
        <dbReference type="ChEBI" id="CHEBI:58228"/>
    </ligand>
</feature>
<feature type="binding site" evidence="1">
    <location>
        <position position="142"/>
    </location>
    <ligand>
        <name>carbamoyl phosphate</name>
        <dbReference type="ChEBI" id="CHEBI:58228"/>
    </ligand>
</feature>
<feature type="binding site" evidence="1">
    <location>
        <position position="172"/>
    </location>
    <ligand>
        <name>L-aspartate</name>
        <dbReference type="ChEBI" id="CHEBI:29991"/>
    </ligand>
</feature>
<feature type="binding site" evidence="1">
    <location>
        <position position="224"/>
    </location>
    <ligand>
        <name>L-aspartate</name>
        <dbReference type="ChEBI" id="CHEBI:29991"/>
    </ligand>
</feature>
<feature type="binding site" evidence="1">
    <location>
        <position position="265"/>
    </location>
    <ligand>
        <name>carbamoyl phosphate</name>
        <dbReference type="ChEBI" id="CHEBI:58228"/>
    </ligand>
</feature>
<feature type="binding site" evidence="1">
    <location>
        <position position="266"/>
    </location>
    <ligand>
        <name>carbamoyl phosphate</name>
        <dbReference type="ChEBI" id="CHEBI:58228"/>
    </ligand>
</feature>